<organism>
    <name type="scientific">Eremothecium gossypii (strain ATCC 10895 / CBS 109.51 / FGSC 9923 / NRRL Y-1056)</name>
    <name type="common">Yeast</name>
    <name type="synonym">Ashbya gossypii</name>
    <dbReference type="NCBI Taxonomy" id="284811"/>
    <lineage>
        <taxon>Eukaryota</taxon>
        <taxon>Fungi</taxon>
        <taxon>Dikarya</taxon>
        <taxon>Ascomycota</taxon>
        <taxon>Saccharomycotina</taxon>
        <taxon>Saccharomycetes</taxon>
        <taxon>Saccharomycetales</taxon>
        <taxon>Saccharomycetaceae</taxon>
        <taxon>Eremothecium</taxon>
    </lineage>
</organism>
<dbReference type="EMBL" id="AE016818">
    <property type="protein sequence ID" value="AAS52615.1"/>
    <property type="molecule type" value="Genomic_DNA"/>
</dbReference>
<dbReference type="RefSeq" id="NP_984791.1">
    <property type="nucleotide sequence ID" value="NM_210145.1"/>
</dbReference>
<dbReference type="SMR" id="Q757T2"/>
<dbReference type="FunCoup" id="Q757T2">
    <property type="interactions" value="1370"/>
</dbReference>
<dbReference type="STRING" id="284811.Q757T2"/>
<dbReference type="EnsemblFungi" id="AAS52615">
    <property type="protein sequence ID" value="AAS52615"/>
    <property type="gene ID" value="AGOS_AEL070W"/>
</dbReference>
<dbReference type="GeneID" id="4620983"/>
<dbReference type="KEGG" id="ago:AGOS_AEL070W"/>
<dbReference type="eggNOG" id="KOG3387">
    <property type="taxonomic scope" value="Eukaryota"/>
</dbReference>
<dbReference type="HOGENOM" id="CLU_084513_4_1_1"/>
<dbReference type="InParanoid" id="Q757T2"/>
<dbReference type="OMA" id="IKNQIYA"/>
<dbReference type="OrthoDB" id="1924699at2759"/>
<dbReference type="Proteomes" id="UP000000591">
    <property type="component" value="Chromosome V"/>
</dbReference>
<dbReference type="GO" id="GO:0031428">
    <property type="term" value="C:box C/D methylation guide snoRNP complex"/>
    <property type="evidence" value="ECO:0000318"/>
    <property type="project" value="GO_Central"/>
</dbReference>
<dbReference type="GO" id="GO:0005730">
    <property type="term" value="C:nucleolus"/>
    <property type="evidence" value="ECO:0000318"/>
    <property type="project" value="GO_Central"/>
</dbReference>
<dbReference type="GO" id="GO:0071011">
    <property type="term" value="C:precatalytic spliceosome"/>
    <property type="evidence" value="ECO:0000318"/>
    <property type="project" value="GO_Central"/>
</dbReference>
<dbReference type="GO" id="GO:0032040">
    <property type="term" value="C:small-subunit processome"/>
    <property type="evidence" value="ECO:0000318"/>
    <property type="project" value="GO_Central"/>
</dbReference>
<dbReference type="GO" id="GO:0046540">
    <property type="term" value="C:U4/U6 x U5 tri-snRNP complex"/>
    <property type="evidence" value="ECO:0000318"/>
    <property type="project" value="GO_Central"/>
</dbReference>
<dbReference type="GO" id="GO:0003723">
    <property type="term" value="F:RNA binding"/>
    <property type="evidence" value="ECO:0000318"/>
    <property type="project" value="GO_Central"/>
</dbReference>
<dbReference type="GO" id="GO:0030490">
    <property type="term" value="P:maturation of SSU-rRNA"/>
    <property type="evidence" value="ECO:0000318"/>
    <property type="project" value="GO_Central"/>
</dbReference>
<dbReference type="GO" id="GO:0000398">
    <property type="term" value="P:mRNA splicing, via spliceosome"/>
    <property type="evidence" value="ECO:0000318"/>
    <property type="project" value="GO_Central"/>
</dbReference>
<dbReference type="CDD" id="cd21104">
    <property type="entry name" value="SNU13"/>
    <property type="match status" value="1"/>
</dbReference>
<dbReference type="FunFam" id="3.30.1330.30:FF:000002">
    <property type="entry name" value="NHP2-like protein 1 homolog"/>
    <property type="match status" value="1"/>
</dbReference>
<dbReference type="Gene3D" id="3.30.1330.30">
    <property type="match status" value="1"/>
</dbReference>
<dbReference type="InterPro" id="IPR050257">
    <property type="entry name" value="eL8/uL1-like"/>
</dbReference>
<dbReference type="InterPro" id="IPR002415">
    <property type="entry name" value="H/ACA_rnp_Nhp2-like"/>
</dbReference>
<dbReference type="InterPro" id="IPR029064">
    <property type="entry name" value="Ribosomal_eL30-like_sf"/>
</dbReference>
<dbReference type="InterPro" id="IPR004037">
    <property type="entry name" value="Ribosomal_eL8-like_CS"/>
</dbReference>
<dbReference type="InterPro" id="IPR004038">
    <property type="entry name" value="Ribosomal_eL8/eL30/eS12/Gad45"/>
</dbReference>
<dbReference type="InterPro" id="IPR018492">
    <property type="entry name" value="Ribosomal_eL8/Nhp2"/>
</dbReference>
<dbReference type="PANTHER" id="PTHR23105">
    <property type="entry name" value="RIBOSOMAL PROTEIN L7AE FAMILY MEMBER"/>
    <property type="match status" value="1"/>
</dbReference>
<dbReference type="Pfam" id="PF01248">
    <property type="entry name" value="Ribosomal_L7Ae"/>
    <property type="match status" value="1"/>
</dbReference>
<dbReference type="PRINTS" id="PR00881">
    <property type="entry name" value="L7ARS6FAMILY"/>
</dbReference>
<dbReference type="PRINTS" id="PR00883">
    <property type="entry name" value="NUCLEARHMG"/>
</dbReference>
<dbReference type="SUPFAM" id="SSF55315">
    <property type="entry name" value="L30e-like"/>
    <property type="match status" value="1"/>
</dbReference>
<dbReference type="PROSITE" id="PS01082">
    <property type="entry name" value="RIBOSOMAL_L7AE"/>
    <property type="match status" value="1"/>
</dbReference>
<evidence type="ECO:0000250" key="1"/>
<evidence type="ECO:0000305" key="2"/>
<comment type="function">
    <text evidence="1">Common component of the spliceosome and rRNA processing machinery. In association with the spliceosomal U4/U6.U5 tri-snRNP particle, required for splicing of pre-mRNA. In association with box C/D snoRNPs, required for processing of pre-ribosomal RNA (rRNA) and site-specific 2'-O-methylation of substrate RNAs. Essential for the accumulation and stability of U4 snRNA, U6 snRNA, and box C/D snoRNAs (By similarity).</text>
</comment>
<comment type="subunit">
    <text evidence="1">Component of the U3 snoRNP particle. Binds to the C'/D and B/C motifs in U3 snoRNA. Component of the 25S U4/U6.U5 tri-snRNP particle, a subcomplex of the spliceosome. Binds to the 5' stem-loop of U4 snRNA (By similarity).</text>
</comment>
<comment type="subcellular location">
    <subcellularLocation>
        <location evidence="1">Nucleus</location>
        <location evidence="1">Nucleolus</location>
    </subcellularLocation>
</comment>
<comment type="similarity">
    <text evidence="2">Belongs to the eukaryotic ribosomal protein eL8 family.</text>
</comment>
<proteinExistence type="inferred from homology"/>
<keyword id="KW-0507">mRNA processing</keyword>
<keyword id="KW-0508">mRNA splicing</keyword>
<keyword id="KW-0539">Nucleus</keyword>
<keyword id="KW-1185">Reference proteome</keyword>
<keyword id="KW-0687">Ribonucleoprotein</keyword>
<keyword id="KW-0690">Ribosome biogenesis</keyword>
<keyword id="KW-0694">RNA-binding</keyword>
<keyword id="KW-0698">rRNA processing</keyword>
<keyword id="KW-0747">Spliceosome</keyword>
<gene>
    <name type="primary">SNU13</name>
    <name type="ordered locus">AEL070W</name>
</gene>
<sequence length="127" mass="13706">MSSTPNPKAFPLADAALTQQILDVVQQASNMRQLKKGANEATKTLNRGISEFIIMAADCEPIEILLHLPLLCEDKNVPYVFVPSRVALGRACGVSRPVIAASITTNDASAIKSQIYAVKDKIETLLI</sequence>
<protein>
    <recommendedName>
        <fullName>13 kDa ribonucleoprotein-associated protein</fullName>
    </recommendedName>
</protein>
<feature type="chain" id="PRO_0000290656" description="13 kDa ribonucleoprotein-associated protein">
    <location>
        <begin position="1"/>
        <end position="127"/>
    </location>
</feature>
<reference key="1">
    <citation type="journal article" date="2004" name="Science">
        <title>The Ashbya gossypii genome as a tool for mapping the ancient Saccharomyces cerevisiae genome.</title>
        <authorList>
            <person name="Dietrich F.S."/>
            <person name="Voegeli S."/>
            <person name="Brachat S."/>
            <person name="Lerch A."/>
            <person name="Gates K."/>
            <person name="Steiner S."/>
            <person name="Mohr C."/>
            <person name="Poehlmann R."/>
            <person name="Luedi P."/>
            <person name="Choi S."/>
            <person name="Wing R.A."/>
            <person name="Flavier A."/>
            <person name="Gaffney T.D."/>
            <person name="Philippsen P."/>
        </authorList>
    </citation>
    <scope>NUCLEOTIDE SEQUENCE [LARGE SCALE GENOMIC DNA]</scope>
    <source>
        <strain>ATCC 10895 / CBS 109.51 / FGSC 9923 / NRRL Y-1056</strain>
    </source>
</reference>
<reference key="2">
    <citation type="journal article" date="2013" name="G3 (Bethesda)">
        <title>Genomes of Ashbya fungi isolated from insects reveal four mating-type loci, numerous translocations, lack of transposons, and distinct gene duplications.</title>
        <authorList>
            <person name="Dietrich F.S."/>
            <person name="Voegeli S."/>
            <person name="Kuo S."/>
            <person name="Philippsen P."/>
        </authorList>
    </citation>
    <scope>GENOME REANNOTATION</scope>
    <source>
        <strain>ATCC 10895 / CBS 109.51 / FGSC 9923 / NRRL Y-1056</strain>
    </source>
</reference>
<accession>Q757T2</accession>
<name>SNU13_EREGS</name>